<organism>
    <name type="scientific">Staphylococcus aureus (strain MW2)</name>
    <dbReference type="NCBI Taxonomy" id="196620"/>
    <lineage>
        <taxon>Bacteria</taxon>
        <taxon>Bacillati</taxon>
        <taxon>Bacillota</taxon>
        <taxon>Bacilli</taxon>
        <taxon>Bacillales</taxon>
        <taxon>Staphylococcaceae</taxon>
        <taxon>Staphylococcus</taxon>
    </lineage>
</organism>
<proteinExistence type="inferred from homology"/>
<sequence>MSNKVQRFIEAERELSQLKHWLKTTHKISIEEFVVLFKVYEAEKISGKELRDTLHFEMLWDTSKIDVIIRKIYKKELISKLRSETDERQVFYFYSTSQKKLLDKITKEIEVLSVTN</sequence>
<reference key="1">
    <citation type="journal article" date="2002" name="Lancet">
        <title>Genome and virulence determinants of high virulence community-acquired MRSA.</title>
        <authorList>
            <person name="Baba T."/>
            <person name="Takeuchi F."/>
            <person name="Kuroda M."/>
            <person name="Yuzawa H."/>
            <person name="Aoki K."/>
            <person name="Oguchi A."/>
            <person name="Nagai Y."/>
            <person name="Iwama N."/>
            <person name="Asano K."/>
            <person name="Naimi T."/>
            <person name="Kuroda H."/>
            <person name="Cui L."/>
            <person name="Yamamoto K."/>
            <person name="Hiramatsu K."/>
        </authorList>
    </citation>
    <scope>NUCLEOTIDE SEQUENCE [LARGE SCALE GENOMIC DNA]</scope>
    <source>
        <strain>MW2</strain>
    </source>
</reference>
<comment type="function">
    <text evidence="1">Part of the pathway by which MgrA and SarA control autolysis.</text>
</comment>
<comment type="subcellular location">
    <subcellularLocation>
        <location evidence="1">Cytoplasm</location>
    </subcellularLocation>
</comment>
<comment type="similarity">
    <text evidence="3">Belongs to the SarA family.</text>
</comment>
<name>SARV_STAAW</name>
<protein>
    <recommendedName>
        <fullName>HTH-type transcriptional regulator SarV</fullName>
    </recommendedName>
    <alternativeName>
        <fullName>Staphylococcal accessory regulator V</fullName>
    </alternativeName>
</protein>
<gene>
    <name type="primary">sarV</name>
    <name type="ordered locus">MW2185</name>
</gene>
<dbReference type="EMBL" id="BA000033">
    <property type="protein sequence ID" value="BAB96050.1"/>
    <property type="molecule type" value="Genomic_DNA"/>
</dbReference>
<dbReference type="RefSeq" id="WP_000066900.1">
    <property type="nucleotide sequence ID" value="NC_003923.1"/>
</dbReference>
<dbReference type="SMR" id="Q7A071"/>
<dbReference type="KEGG" id="sam:MW2185"/>
<dbReference type="HOGENOM" id="CLU_2095367_0_0_9"/>
<dbReference type="GO" id="GO:0005737">
    <property type="term" value="C:cytoplasm"/>
    <property type="evidence" value="ECO:0007669"/>
    <property type="project" value="UniProtKB-SubCell"/>
</dbReference>
<dbReference type="GO" id="GO:0003677">
    <property type="term" value="F:DNA binding"/>
    <property type="evidence" value="ECO:0007669"/>
    <property type="project" value="UniProtKB-KW"/>
</dbReference>
<dbReference type="GO" id="GO:0006355">
    <property type="term" value="P:regulation of DNA-templated transcription"/>
    <property type="evidence" value="ECO:0007669"/>
    <property type="project" value="InterPro"/>
</dbReference>
<dbReference type="Gene3D" id="1.10.10.10">
    <property type="entry name" value="Winged helix-like DNA-binding domain superfamily/Winged helix DNA-binding domain"/>
    <property type="match status" value="1"/>
</dbReference>
<dbReference type="InterPro" id="IPR010166">
    <property type="entry name" value="SarA/Rot_dom"/>
</dbReference>
<dbReference type="InterPro" id="IPR055166">
    <property type="entry name" value="Transc_reg_Sar_Rot_HTH"/>
</dbReference>
<dbReference type="InterPro" id="IPR036388">
    <property type="entry name" value="WH-like_DNA-bd_sf"/>
</dbReference>
<dbReference type="InterPro" id="IPR036390">
    <property type="entry name" value="WH_DNA-bd_sf"/>
</dbReference>
<dbReference type="NCBIfam" id="TIGR01889">
    <property type="entry name" value="Staph_reg_Sar"/>
    <property type="match status" value="1"/>
</dbReference>
<dbReference type="Pfam" id="PF22381">
    <property type="entry name" value="Staph_reg_Sar_Rot"/>
    <property type="match status" value="1"/>
</dbReference>
<dbReference type="SUPFAM" id="SSF46785">
    <property type="entry name" value="Winged helix' DNA-binding domain"/>
    <property type="match status" value="1"/>
</dbReference>
<evidence type="ECO:0000250" key="1"/>
<evidence type="ECO:0000255" key="2"/>
<evidence type="ECO:0000305" key="3"/>
<keyword id="KW-0010">Activator</keyword>
<keyword id="KW-0963">Cytoplasm</keyword>
<keyword id="KW-0238">DNA-binding</keyword>
<keyword id="KW-0804">Transcription</keyword>
<keyword id="KW-0805">Transcription regulation</keyword>
<keyword id="KW-0843">Virulence</keyword>
<feature type="chain" id="PRO_0000219613" description="HTH-type transcriptional regulator SarV">
    <location>
        <begin position="1"/>
        <end position="116"/>
    </location>
</feature>
<feature type="DNA-binding region" description="H-T-H motif" evidence="2">
    <location>
        <begin position="51"/>
        <end position="74"/>
    </location>
</feature>
<accession>Q7A071</accession>